<name>MNTR_LISMH</name>
<comment type="function">
    <text evidence="1">Central regulator of manganese homeostasis.</text>
</comment>
<comment type="activity regulation">
    <text evidence="1">DNA binding is strongly activated by Mn(2+).</text>
</comment>
<comment type="subunit">
    <text evidence="1">Homodimer.</text>
</comment>
<comment type="subcellular location">
    <subcellularLocation>
        <location evidence="1">Cytoplasm</location>
    </subcellularLocation>
</comment>
<comment type="similarity">
    <text evidence="1">Belongs to the DtxR/MntR family.</text>
</comment>
<protein>
    <recommendedName>
        <fullName evidence="1">HTH-type transcriptional regulator MntR</fullName>
    </recommendedName>
    <alternativeName>
        <fullName evidence="1">Manganese transport regulator</fullName>
    </alternativeName>
</protein>
<evidence type="ECO:0000255" key="1">
    <source>
        <dbReference type="HAMAP-Rule" id="MF_00732"/>
    </source>
</evidence>
<sequence>MPTPSMEDYIEKIYSLIETKGYARVSDIADELFVHPSSVTKMVQKLDKDEYLIYEKYRGLILTPKGTQMGKRLLERHALLESFLSIIGVDPSHIYHDVEGIEHHLSWNSIDRIGDVVQFFENHPDALKTLKAMETTKPETKE</sequence>
<organism>
    <name type="scientific">Listeria monocytogenes serotype 4a (strain HCC23)</name>
    <dbReference type="NCBI Taxonomy" id="552536"/>
    <lineage>
        <taxon>Bacteria</taxon>
        <taxon>Bacillati</taxon>
        <taxon>Bacillota</taxon>
        <taxon>Bacilli</taxon>
        <taxon>Bacillales</taxon>
        <taxon>Listeriaceae</taxon>
        <taxon>Listeria</taxon>
    </lineage>
</organism>
<accession>B8DDM5</accession>
<dbReference type="EMBL" id="CP001175">
    <property type="protein sequence ID" value="ACK39034.1"/>
    <property type="molecule type" value="Genomic_DNA"/>
</dbReference>
<dbReference type="RefSeq" id="WP_003725831.1">
    <property type="nucleotide sequence ID" value="NC_011660.1"/>
</dbReference>
<dbReference type="SMR" id="B8DDM5"/>
<dbReference type="KEGG" id="lmh:LMHCC_0679"/>
<dbReference type="HOGENOM" id="CLU_069532_3_0_9"/>
<dbReference type="GO" id="GO:0005737">
    <property type="term" value="C:cytoplasm"/>
    <property type="evidence" value="ECO:0007669"/>
    <property type="project" value="UniProtKB-SubCell"/>
</dbReference>
<dbReference type="GO" id="GO:0003677">
    <property type="term" value="F:DNA binding"/>
    <property type="evidence" value="ECO:0007669"/>
    <property type="project" value="UniProtKB-KW"/>
</dbReference>
<dbReference type="GO" id="GO:0003700">
    <property type="term" value="F:DNA-binding transcription factor activity"/>
    <property type="evidence" value="ECO:0007669"/>
    <property type="project" value="UniProtKB-UniRule"/>
</dbReference>
<dbReference type="GO" id="GO:0030145">
    <property type="term" value="F:manganese ion binding"/>
    <property type="evidence" value="ECO:0007669"/>
    <property type="project" value="UniProtKB-UniRule"/>
</dbReference>
<dbReference type="GO" id="GO:0046983">
    <property type="term" value="F:protein dimerization activity"/>
    <property type="evidence" value="ECO:0007669"/>
    <property type="project" value="InterPro"/>
</dbReference>
<dbReference type="GO" id="GO:0030026">
    <property type="term" value="P:intracellular manganese ion homeostasis"/>
    <property type="evidence" value="ECO:0007669"/>
    <property type="project" value="UniProtKB-UniRule"/>
</dbReference>
<dbReference type="FunFam" id="1.10.10.10:FF:000189">
    <property type="entry name" value="HTH-type transcriptional regulator MntR"/>
    <property type="match status" value="1"/>
</dbReference>
<dbReference type="Gene3D" id="1.10.60.10">
    <property type="entry name" value="Iron dependent repressor, metal binding and dimerisation domain"/>
    <property type="match status" value="1"/>
</dbReference>
<dbReference type="Gene3D" id="1.10.10.10">
    <property type="entry name" value="Winged helix-like DNA-binding domain superfamily/Winged helix DNA-binding domain"/>
    <property type="match status" value="1"/>
</dbReference>
<dbReference type="HAMAP" id="MF_00732">
    <property type="entry name" value="HTH_MntR"/>
    <property type="match status" value="1"/>
</dbReference>
<dbReference type="InterPro" id="IPR050536">
    <property type="entry name" value="DtxR_MntR_Metal-Reg"/>
</dbReference>
<dbReference type="InterPro" id="IPR001367">
    <property type="entry name" value="Fe_dep_repressor"/>
</dbReference>
<dbReference type="InterPro" id="IPR036421">
    <property type="entry name" value="Fe_dep_repressor_sf"/>
</dbReference>
<dbReference type="InterPro" id="IPR022687">
    <property type="entry name" value="HTH_DTXR"/>
</dbReference>
<dbReference type="InterPro" id="IPR022897">
    <property type="entry name" value="HTH_tscrpt_reg_MntR"/>
</dbReference>
<dbReference type="InterPro" id="IPR022689">
    <property type="entry name" value="Iron_dep_repressor"/>
</dbReference>
<dbReference type="InterPro" id="IPR036388">
    <property type="entry name" value="WH-like_DNA-bd_sf"/>
</dbReference>
<dbReference type="InterPro" id="IPR036390">
    <property type="entry name" value="WH_DNA-bd_sf"/>
</dbReference>
<dbReference type="NCBIfam" id="NF003025">
    <property type="entry name" value="PRK03902.1"/>
    <property type="match status" value="1"/>
</dbReference>
<dbReference type="PANTHER" id="PTHR33238">
    <property type="entry name" value="IRON (METAL) DEPENDENT REPRESSOR, DTXR FAMILY"/>
    <property type="match status" value="1"/>
</dbReference>
<dbReference type="PANTHER" id="PTHR33238:SF11">
    <property type="entry name" value="TRANSCRIPTIONAL REGULATOR MNTR"/>
    <property type="match status" value="1"/>
</dbReference>
<dbReference type="Pfam" id="PF02742">
    <property type="entry name" value="Fe_dep_repr_C"/>
    <property type="match status" value="1"/>
</dbReference>
<dbReference type="Pfam" id="PF01325">
    <property type="entry name" value="Fe_dep_repress"/>
    <property type="match status" value="1"/>
</dbReference>
<dbReference type="SMART" id="SM00529">
    <property type="entry name" value="HTH_DTXR"/>
    <property type="match status" value="1"/>
</dbReference>
<dbReference type="SUPFAM" id="SSF47979">
    <property type="entry name" value="Iron-dependent repressor protein, dimerization domain"/>
    <property type="match status" value="1"/>
</dbReference>
<dbReference type="SUPFAM" id="SSF46785">
    <property type="entry name" value="Winged helix' DNA-binding domain"/>
    <property type="match status" value="1"/>
</dbReference>
<dbReference type="PROSITE" id="PS50944">
    <property type="entry name" value="HTH_DTXR"/>
    <property type="match status" value="1"/>
</dbReference>
<feature type="chain" id="PRO_1000190481" description="HTH-type transcriptional regulator MntR">
    <location>
        <begin position="1"/>
        <end position="142"/>
    </location>
</feature>
<feature type="domain" description="HTH dtxR-type" evidence="1">
    <location>
        <begin position="1"/>
        <end position="63"/>
    </location>
</feature>
<feature type="binding site" evidence="1">
    <location>
        <position position="8"/>
    </location>
    <ligand>
        <name>Mn(2+)</name>
        <dbReference type="ChEBI" id="CHEBI:29035"/>
        <label>1</label>
    </ligand>
</feature>
<feature type="binding site" evidence="1">
    <location>
        <position position="11"/>
    </location>
    <ligand>
        <name>Mn(2+)</name>
        <dbReference type="ChEBI" id="CHEBI:29035"/>
        <label>2</label>
    </ligand>
</feature>
<feature type="binding site" evidence="1">
    <location>
        <position position="77"/>
    </location>
    <ligand>
        <name>Mn(2+)</name>
        <dbReference type="ChEBI" id="CHEBI:29035"/>
        <label>2</label>
    </ligand>
</feature>
<feature type="binding site" evidence="1">
    <location>
        <position position="99"/>
    </location>
    <ligand>
        <name>Mn(2+)</name>
        <dbReference type="ChEBI" id="CHEBI:29035"/>
        <label>1</label>
    </ligand>
</feature>
<feature type="binding site" evidence="1">
    <location>
        <position position="99"/>
    </location>
    <ligand>
        <name>Mn(2+)</name>
        <dbReference type="ChEBI" id="CHEBI:29035"/>
        <label>2</label>
    </ligand>
</feature>
<feature type="binding site" evidence="1">
    <location>
        <position position="102"/>
    </location>
    <ligand>
        <name>Mn(2+)</name>
        <dbReference type="ChEBI" id="CHEBI:29035"/>
        <label>1</label>
    </ligand>
</feature>
<feature type="binding site" evidence="1">
    <location>
        <position position="102"/>
    </location>
    <ligand>
        <name>Mn(2+)</name>
        <dbReference type="ChEBI" id="CHEBI:29035"/>
        <label>2</label>
    </ligand>
</feature>
<feature type="binding site" evidence="1">
    <location>
        <position position="103"/>
    </location>
    <ligand>
        <name>Mn(2+)</name>
        <dbReference type="ChEBI" id="CHEBI:29035"/>
        <label>1</label>
    </ligand>
</feature>
<gene>
    <name evidence="1" type="primary">mntR</name>
    <name type="ordered locus">LMHCC_0679</name>
</gene>
<keyword id="KW-0010">Activator</keyword>
<keyword id="KW-0963">Cytoplasm</keyword>
<keyword id="KW-0238">DNA-binding</keyword>
<keyword id="KW-0464">Manganese</keyword>
<keyword id="KW-0479">Metal-binding</keyword>
<keyword id="KW-0678">Repressor</keyword>
<keyword id="KW-0804">Transcription</keyword>
<keyword id="KW-0805">Transcription regulation</keyword>
<proteinExistence type="inferred from homology"/>
<reference key="1">
    <citation type="journal article" date="2011" name="J. Bacteriol.">
        <title>Genome sequence of lineage III Listeria monocytogenes strain HCC23.</title>
        <authorList>
            <person name="Steele C.L."/>
            <person name="Donaldson J.R."/>
            <person name="Paul D."/>
            <person name="Banes M.M."/>
            <person name="Arick T."/>
            <person name="Bridges S.M."/>
            <person name="Lawrence M.L."/>
        </authorList>
    </citation>
    <scope>NUCLEOTIDE SEQUENCE [LARGE SCALE GENOMIC DNA]</scope>
    <source>
        <strain>HCC23</strain>
    </source>
</reference>